<reference key="1">
    <citation type="journal article" date="2005" name="Proc. Natl. Acad. Sci. U.S.A.">
        <title>The complete genome sequence of Mycobacterium avium subspecies paratuberculosis.</title>
        <authorList>
            <person name="Li L."/>
            <person name="Bannantine J.P."/>
            <person name="Zhang Q."/>
            <person name="Amonsin A."/>
            <person name="May B.J."/>
            <person name="Alt D."/>
            <person name="Banerji N."/>
            <person name="Kanjilal S."/>
            <person name="Kapur V."/>
        </authorList>
    </citation>
    <scope>NUCLEOTIDE SEQUENCE [LARGE SCALE GENOMIC DNA]</scope>
    <source>
        <strain>ATCC BAA-968 / K-10</strain>
    </source>
</reference>
<comment type="catalytic activity">
    <reaction evidence="1">
        <text>tRNA(Phe) + L-phenylalanine + ATP = L-phenylalanyl-tRNA(Phe) + AMP + diphosphate + H(+)</text>
        <dbReference type="Rhea" id="RHEA:19413"/>
        <dbReference type="Rhea" id="RHEA-COMP:9668"/>
        <dbReference type="Rhea" id="RHEA-COMP:9699"/>
        <dbReference type="ChEBI" id="CHEBI:15378"/>
        <dbReference type="ChEBI" id="CHEBI:30616"/>
        <dbReference type="ChEBI" id="CHEBI:33019"/>
        <dbReference type="ChEBI" id="CHEBI:58095"/>
        <dbReference type="ChEBI" id="CHEBI:78442"/>
        <dbReference type="ChEBI" id="CHEBI:78531"/>
        <dbReference type="ChEBI" id="CHEBI:456215"/>
        <dbReference type="EC" id="6.1.1.20"/>
    </reaction>
</comment>
<comment type="cofactor">
    <cofactor evidence="1">
        <name>Mg(2+)</name>
        <dbReference type="ChEBI" id="CHEBI:18420"/>
    </cofactor>
    <text evidence="1">Binds 2 magnesium ions per tetramer.</text>
</comment>
<comment type="subunit">
    <text evidence="1">Tetramer of two alpha and two beta subunits.</text>
</comment>
<comment type="subcellular location">
    <subcellularLocation>
        <location evidence="1">Cytoplasm</location>
    </subcellularLocation>
</comment>
<comment type="similarity">
    <text evidence="1">Belongs to the phenylalanyl-tRNA synthetase beta subunit family. Type 1 subfamily.</text>
</comment>
<accession>Q740J0</accession>
<gene>
    <name evidence="1" type="primary">pheT</name>
    <name type="ordered locus">MAP_1360</name>
</gene>
<dbReference type="EC" id="6.1.1.20" evidence="1"/>
<dbReference type="EMBL" id="AE016958">
    <property type="protein sequence ID" value="AAS03677.1"/>
    <property type="molecule type" value="Genomic_DNA"/>
</dbReference>
<dbReference type="RefSeq" id="WP_010949175.1">
    <property type="nucleotide sequence ID" value="NZ_CP106873.1"/>
</dbReference>
<dbReference type="SMR" id="Q740J0"/>
<dbReference type="STRING" id="262316.MAP_1360"/>
<dbReference type="KEGG" id="mpa:MAP_1360"/>
<dbReference type="PATRIC" id="fig|262316.17.peg.1434"/>
<dbReference type="eggNOG" id="COG0072">
    <property type="taxonomic scope" value="Bacteria"/>
</dbReference>
<dbReference type="eggNOG" id="COG0073">
    <property type="taxonomic scope" value="Bacteria"/>
</dbReference>
<dbReference type="HOGENOM" id="CLU_016891_0_0_11"/>
<dbReference type="Proteomes" id="UP000000580">
    <property type="component" value="Chromosome"/>
</dbReference>
<dbReference type="GO" id="GO:0009328">
    <property type="term" value="C:phenylalanine-tRNA ligase complex"/>
    <property type="evidence" value="ECO:0007669"/>
    <property type="project" value="TreeGrafter"/>
</dbReference>
<dbReference type="GO" id="GO:0005524">
    <property type="term" value="F:ATP binding"/>
    <property type="evidence" value="ECO:0007669"/>
    <property type="project" value="UniProtKB-UniRule"/>
</dbReference>
<dbReference type="GO" id="GO:0000287">
    <property type="term" value="F:magnesium ion binding"/>
    <property type="evidence" value="ECO:0007669"/>
    <property type="project" value="UniProtKB-UniRule"/>
</dbReference>
<dbReference type="GO" id="GO:0004826">
    <property type="term" value="F:phenylalanine-tRNA ligase activity"/>
    <property type="evidence" value="ECO:0007669"/>
    <property type="project" value="UniProtKB-UniRule"/>
</dbReference>
<dbReference type="GO" id="GO:0000049">
    <property type="term" value="F:tRNA binding"/>
    <property type="evidence" value="ECO:0007669"/>
    <property type="project" value="UniProtKB-KW"/>
</dbReference>
<dbReference type="GO" id="GO:0006432">
    <property type="term" value="P:phenylalanyl-tRNA aminoacylation"/>
    <property type="evidence" value="ECO:0007669"/>
    <property type="project" value="UniProtKB-UniRule"/>
</dbReference>
<dbReference type="CDD" id="cd00769">
    <property type="entry name" value="PheRS_beta_core"/>
    <property type="match status" value="1"/>
</dbReference>
<dbReference type="CDD" id="cd02796">
    <property type="entry name" value="tRNA_bind_bactPheRS"/>
    <property type="match status" value="1"/>
</dbReference>
<dbReference type="FunFam" id="2.40.50.140:FF:000045">
    <property type="entry name" value="Phenylalanine--tRNA ligase beta subunit"/>
    <property type="match status" value="1"/>
</dbReference>
<dbReference type="FunFam" id="3.30.70.380:FF:000001">
    <property type="entry name" value="Phenylalanine--tRNA ligase beta subunit"/>
    <property type="match status" value="1"/>
</dbReference>
<dbReference type="FunFam" id="3.30.930.10:FF:000130">
    <property type="entry name" value="Phenylalanine--tRNA ligase beta subunit"/>
    <property type="match status" value="1"/>
</dbReference>
<dbReference type="Gene3D" id="3.30.56.10">
    <property type="match status" value="2"/>
</dbReference>
<dbReference type="Gene3D" id="3.30.930.10">
    <property type="entry name" value="Bira Bifunctional Protein, Domain 2"/>
    <property type="match status" value="1"/>
</dbReference>
<dbReference type="Gene3D" id="3.30.70.380">
    <property type="entry name" value="Ferrodoxin-fold anticodon-binding domain"/>
    <property type="match status" value="1"/>
</dbReference>
<dbReference type="Gene3D" id="2.40.50.140">
    <property type="entry name" value="Nucleic acid-binding proteins"/>
    <property type="match status" value="1"/>
</dbReference>
<dbReference type="Gene3D" id="3.50.40.10">
    <property type="entry name" value="Phenylalanyl-trna Synthetase, Chain B, domain 3"/>
    <property type="match status" value="1"/>
</dbReference>
<dbReference type="HAMAP" id="MF_00283">
    <property type="entry name" value="Phe_tRNA_synth_beta1"/>
    <property type="match status" value="1"/>
</dbReference>
<dbReference type="InterPro" id="IPR045864">
    <property type="entry name" value="aa-tRNA-synth_II/BPL/LPL"/>
</dbReference>
<dbReference type="InterPro" id="IPR005146">
    <property type="entry name" value="B3/B4_tRNA-bd"/>
</dbReference>
<dbReference type="InterPro" id="IPR009061">
    <property type="entry name" value="DNA-bd_dom_put_sf"/>
</dbReference>
<dbReference type="InterPro" id="IPR005121">
    <property type="entry name" value="Fdx_antiC-bd"/>
</dbReference>
<dbReference type="InterPro" id="IPR036690">
    <property type="entry name" value="Fdx_antiC-bd_sf"/>
</dbReference>
<dbReference type="InterPro" id="IPR012340">
    <property type="entry name" value="NA-bd_OB-fold"/>
</dbReference>
<dbReference type="InterPro" id="IPR045060">
    <property type="entry name" value="Phe-tRNA-ligase_IIc_bsu"/>
</dbReference>
<dbReference type="InterPro" id="IPR004532">
    <property type="entry name" value="Phe-tRNA-ligase_IIc_bsu_bact"/>
</dbReference>
<dbReference type="InterPro" id="IPR020825">
    <property type="entry name" value="Phe-tRNA_synthase-like_B3/B4"/>
</dbReference>
<dbReference type="InterPro" id="IPR041616">
    <property type="entry name" value="PheRS_beta_core"/>
</dbReference>
<dbReference type="InterPro" id="IPR002547">
    <property type="entry name" value="tRNA-bd_dom"/>
</dbReference>
<dbReference type="InterPro" id="IPR033714">
    <property type="entry name" value="tRNA_bind_bactPheRS"/>
</dbReference>
<dbReference type="InterPro" id="IPR005147">
    <property type="entry name" value="tRNA_synthase_B5-dom"/>
</dbReference>
<dbReference type="NCBIfam" id="TIGR00472">
    <property type="entry name" value="pheT_bact"/>
    <property type="match status" value="1"/>
</dbReference>
<dbReference type="PANTHER" id="PTHR10947:SF0">
    <property type="entry name" value="PHENYLALANINE--TRNA LIGASE BETA SUBUNIT"/>
    <property type="match status" value="1"/>
</dbReference>
<dbReference type="PANTHER" id="PTHR10947">
    <property type="entry name" value="PHENYLALANYL-TRNA SYNTHETASE BETA CHAIN AND LEUCINE-RICH REPEAT-CONTAINING PROTEIN 47"/>
    <property type="match status" value="1"/>
</dbReference>
<dbReference type="Pfam" id="PF03483">
    <property type="entry name" value="B3_4"/>
    <property type="match status" value="1"/>
</dbReference>
<dbReference type="Pfam" id="PF03484">
    <property type="entry name" value="B5"/>
    <property type="match status" value="1"/>
</dbReference>
<dbReference type="Pfam" id="PF03147">
    <property type="entry name" value="FDX-ACB"/>
    <property type="match status" value="1"/>
</dbReference>
<dbReference type="Pfam" id="PF01588">
    <property type="entry name" value="tRNA_bind"/>
    <property type="match status" value="1"/>
</dbReference>
<dbReference type="Pfam" id="PF17759">
    <property type="entry name" value="tRNA_synthFbeta"/>
    <property type="match status" value="1"/>
</dbReference>
<dbReference type="SMART" id="SM00873">
    <property type="entry name" value="B3_4"/>
    <property type="match status" value="1"/>
</dbReference>
<dbReference type="SMART" id="SM00874">
    <property type="entry name" value="B5"/>
    <property type="match status" value="1"/>
</dbReference>
<dbReference type="SMART" id="SM00896">
    <property type="entry name" value="FDX-ACB"/>
    <property type="match status" value="1"/>
</dbReference>
<dbReference type="SUPFAM" id="SSF54991">
    <property type="entry name" value="Anticodon-binding domain of PheRS"/>
    <property type="match status" value="1"/>
</dbReference>
<dbReference type="SUPFAM" id="SSF55681">
    <property type="entry name" value="Class II aaRS and biotin synthetases"/>
    <property type="match status" value="1"/>
</dbReference>
<dbReference type="SUPFAM" id="SSF50249">
    <property type="entry name" value="Nucleic acid-binding proteins"/>
    <property type="match status" value="1"/>
</dbReference>
<dbReference type="SUPFAM" id="SSF56037">
    <property type="entry name" value="PheT/TilS domain"/>
    <property type="match status" value="1"/>
</dbReference>
<dbReference type="SUPFAM" id="SSF46955">
    <property type="entry name" value="Putative DNA-binding domain"/>
    <property type="match status" value="1"/>
</dbReference>
<dbReference type="PROSITE" id="PS51483">
    <property type="entry name" value="B5"/>
    <property type="match status" value="1"/>
</dbReference>
<dbReference type="PROSITE" id="PS51447">
    <property type="entry name" value="FDX_ACB"/>
    <property type="match status" value="1"/>
</dbReference>
<dbReference type="PROSITE" id="PS50886">
    <property type="entry name" value="TRBD"/>
    <property type="match status" value="1"/>
</dbReference>
<organism>
    <name type="scientific">Mycolicibacterium paratuberculosis (strain ATCC BAA-968 / K-10)</name>
    <name type="common">Mycobacterium paratuberculosis</name>
    <dbReference type="NCBI Taxonomy" id="262316"/>
    <lineage>
        <taxon>Bacteria</taxon>
        <taxon>Bacillati</taxon>
        <taxon>Actinomycetota</taxon>
        <taxon>Actinomycetes</taxon>
        <taxon>Mycobacteriales</taxon>
        <taxon>Mycobacteriaceae</taxon>
        <taxon>Mycobacterium</taxon>
        <taxon>Mycobacterium avium complex (MAC)</taxon>
    </lineage>
</organism>
<sequence>MRVPYSWLREVVAAGAPDWDVAPAELEQTLIRIGHEVEEVIELGPVDGPLTVGRVTDIEELTGFKKPIRFCHVDVGDDVDREIVCGATNFVAGDLVVVALPGTTLPGGFAIAARKTYGRNSDGMICSAAELGLGADHSGILVLPPGTAEPGADGAAVLGLDDVIFHLAITPDRGYCMSLRGLAREIACAYDLEFVDPADVKPLPVDGQAWPLTVQPDTGVRRFALRPVTGIDPAAVSPWWLQRRLLLSGIRATSPAVDVTNYVMLELGHPMHAHDRNRISGGLGVRFARPGETVVTLDDIERKLEPVDVLIVDDAATAAIGGVMGAASTEVRADSTDVLLEAAVWDPAAVSRTQRRLHLPSEAARRYERGVDPAISVAALDRCAALLAGIAGGKVSEALTDWRGEPACDGWSPPAIQMPADLPDRLAGVIYPPGTAAKRLAQIGAAVTADGGTLTVVPPSWRPDLLQPADLVEEVLRLEGLEVIGSVLPSAPAGRGLSAAQRRRRAIGRSLAQSGYVEILPTPFLPAGVFDVWGLPDDDPRRGTTQVLNPLEADRPHLATTLLPALLEALVRNVSRGLVDVSLYALAQVVQPTAETRAVQFIPVDRRPTDAEIAVLDASLPRQPQHVAAVLTGLREQRGPWGPGRRAEAADAFEAVRVIARAAGVDVRLRAAQQLPWHPGRCAEVLVGDTPVGYAGQLHPAVVERAGLPRGTCALELDLDAIPLVATLPAPRISPFPAVFQDVSLVVAADVPAQAVADAVCEGAGDLLEDLQLFDVFTGPQLGEHRKSLTFALRFRAPDRTLTEDDATAARDAAVRRAAEAVGAELRT</sequence>
<feature type="chain" id="PRO_0000126914" description="Phenylalanine--tRNA ligase beta subunit">
    <location>
        <begin position="1"/>
        <end position="828"/>
    </location>
</feature>
<feature type="domain" description="tRNA-binding" evidence="1">
    <location>
        <begin position="44"/>
        <end position="155"/>
    </location>
</feature>
<feature type="domain" description="B5" evidence="1">
    <location>
        <begin position="411"/>
        <end position="486"/>
    </location>
</feature>
<feature type="domain" description="FDX-ACB" evidence="1">
    <location>
        <begin position="734"/>
        <end position="827"/>
    </location>
</feature>
<feature type="binding site" evidence="1">
    <location>
        <position position="464"/>
    </location>
    <ligand>
        <name>Mg(2+)</name>
        <dbReference type="ChEBI" id="CHEBI:18420"/>
        <note>shared with alpha subunit</note>
    </ligand>
</feature>
<feature type="binding site" evidence="1">
    <location>
        <position position="470"/>
    </location>
    <ligand>
        <name>Mg(2+)</name>
        <dbReference type="ChEBI" id="CHEBI:18420"/>
        <note>shared with alpha subunit</note>
    </ligand>
</feature>
<feature type="binding site" evidence="1">
    <location>
        <position position="473"/>
    </location>
    <ligand>
        <name>Mg(2+)</name>
        <dbReference type="ChEBI" id="CHEBI:18420"/>
        <note>shared with alpha subunit</note>
    </ligand>
</feature>
<feature type="binding site" evidence="1">
    <location>
        <position position="474"/>
    </location>
    <ligand>
        <name>Mg(2+)</name>
        <dbReference type="ChEBI" id="CHEBI:18420"/>
        <note>shared with alpha subunit</note>
    </ligand>
</feature>
<protein>
    <recommendedName>
        <fullName evidence="1">Phenylalanine--tRNA ligase beta subunit</fullName>
        <ecNumber evidence="1">6.1.1.20</ecNumber>
    </recommendedName>
    <alternativeName>
        <fullName evidence="1">Phenylalanyl-tRNA synthetase beta subunit</fullName>
        <shortName evidence="1">PheRS</shortName>
    </alternativeName>
</protein>
<name>SYFB_MYCPA</name>
<proteinExistence type="inferred from homology"/>
<evidence type="ECO:0000255" key="1">
    <source>
        <dbReference type="HAMAP-Rule" id="MF_00283"/>
    </source>
</evidence>
<keyword id="KW-0030">Aminoacyl-tRNA synthetase</keyword>
<keyword id="KW-0067">ATP-binding</keyword>
<keyword id="KW-0963">Cytoplasm</keyword>
<keyword id="KW-0436">Ligase</keyword>
<keyword id="KW-0460">Magnesium</keyword>
<keyword id="KW-0479">Metal-binding</keyword>
<keyword id="KW-0547">Nucleotide-binding</keyword>
<keyword id="KW-0648">Protein biosynthesis</keyword>
<keyword id="KW-1185">Reference proteome</keyword>
<keyword id="KW-0694">RNA-binding</keyword>
<keyword id="KW-0820">tRNA-binding</keyword>